<reference key="1">
    <citation type="submission" date="2007-10" db="EMBL/GenBank/DDBJ databases">
        <title>Complete sequence of Shewanella pealeana ATCC 700345.</title>
        <authorList>
            <consortium name="US DOE Joint Genome Institute"/>
            <person name="Copeland A."/>
            <person name="Lucas S."/>
            <person name="Lapidus A."/>
            <person name="Barry K."/>
            <person name="Glavina del Rio T."/>
            <person name="Dalin E."/>
            <person name="Tice H."/>
            <person name="Pitluck S."/>
            <person name="Chertkov O."/>
            <person name="Brettin T."/>
            <person name="Bruce D."/>
            <person name="Detter J.C."/>
            <person name="Han C."/>
            <person name="Schmutz J."/>
            <person name="Larimer F."/>
            <person name="Land M."/>
            <person name="Hauser L."/>
            <person name="Kyrpides N."/>
            <person name="Kim E."/>
            <person name="Zhao J.-S.Z."/>
            <person name="Manno D."/>
            <person name="Hawari J."/>
            <person name="Richardson P."/>
        </authorList>
    </citation>
    <scope>NUCLEOTIDE SEQUENCE [LARGE SCALE GENOMIC DNA]</scope>
    <source>
        <strain>ATCC 700345 / ANG-SQ1</strain>
    </source>
</reference>
<accession>A8H1T1</accession>
<evidence type="ECO:0000255" key="1">
    <source>
        <dbReference type="HAMAP-Rule" id="MF_00090"/>
    </source>
</evidence>
<protein>
    <recommendedName>
        <fullName evidence="1">Protein-L-isoaspartate O-methyltransferase</fullName>
        <ecNumber evidence="1">2.1.1.77</ecNumber>
    </recommendedName>
    <alternativeName>
        <fullName evidence="1">L-isoaspartyl protein carboxyl methyltransferase</fullName>
    </alternativeName>
    <alternativeName>
        <fullName evidence="1">Protein L-isoaspartyl methyltransferase</fullName>
    </alternativeName>
    <alternativeName>
        <fullName evidence="1">Protein-beta-aspartate methyltransferase</fullName>
        <shortName evidence="1">PIMT</shortName>
    </alternativeName>
</protein>
<proteinExistence type="inferred from homology"/>
<dbReference type="EC" id="2.1.1.77" evidence="1"/>
<dbReference type="EMBL" id="CP000851">
    <property type="protein sequence ID" value="ABV86518.1"/>
    <property type="molecule type" value="Genomic_DNA"/>
</dbReference>
<dbReference type="RefSeq" id="WP_012154445.1">
    <property type="nucleotide sequence ID" value="NC_009901.1"/>
</dbReference>
<dbReference type="SMR" id="A8H1T1"/>
<dbReference type="STRING" id="398579.Spea_1191"/>
<dbReference type="KEGG" id="spl:Spea_1191"/>
<dbReference type="eggNOG" id="COG2518">
    <property type="taxonomic scope" value="Bacteria"/>
</dbReference>
<dbReference type="HOGENOM" id="CLU_055432_2_0_6"/>
<dbReference type="OrthoDB" id="9810066at2"/>
<dbReference type="Proteomes" id="UP000002608">
    <property type="component" value="Chromosome"/>
</dbReference>
<dbReference type="GO" id="GO:0005737">
    <property type="term" value="C:cytoplasm"/>
    <property type="evidence" value="ECO:0007669"/>
    <property type="project" value="UniProtKB-SubCell"/>
</dbReference>
<dbReference type="GO" id="GO:0004719">
    <property type="term" value="F:protein-L-isoaspartate (D-aspartate) O-methyltransferase activity"/>
    <property type="evidence" value="ECO:0007669"/>
    <property type="project" value="UniProtKB-UniRule"/>
</dbReference>
<dbReference type="GO" id="GO:0032259">
    <property type="term" value="P:methylation"/>
    <property type="evidence" value="ECO:0007669"/>
    <property type="project" value="UniProtKB-KW"/>
</dbReference>
<dbReference type="GO" id="GO:0036211">
    <property type="term" value="P:protein modification process"/>
    <property type="evidence" value="ECO:0007669"/>
    <property type="project" value="UniProtKB-UniRule"/>
</dbReference>
<dbReference type="GO" id="GO:0030091">
    <property type="term" value="P:protein repair"/>
    <property type="evidence" value="ECO:0007669"/>
    <property type="project" value="UniProtKB-UniRule"/>
</dbReference>
<dbReference type="CDD" id="cd02440">
    <property type="entry name" value="AdoMet_MTases"/>
    <property type="match status" value="1"/>
</dbReference>
<dbReference type="FunFam" id="3.40.50.150:FF:000010">
    <property type="entry name" value="Protein-L-isoaspartate O-methyltransferase"/>
    <property type="match status" value="1"/>
</dbReference>
<dbReference type="Gene3D" id="3.40.50.150">
    <property type="entry name" value="Vaccinia Virus protein VP39"/>
    <property type="match status" value="1"/>
</dbReference>
<dbReference type="HAMAP" id="MF_00090">
    <property type="entry name" value="PIMT"/>
    <property type="match status" value="1"/>
</dbReference>
<dbReference type="InterPro" id="IPR000682">
    <property type="entry name" value="PCMT"/>
</dbReference>
<dbReference type="InterPro" id="IPR029063">
    <property type="entry name" value="SAM-dependent_MTases_sf"/>
</dbReference>
<dbReference type="NCBIfam" id="TIGR00080">
    <property type="entry name" value="pimt"/>
    <property type="match status" value="1"/>
</dbReference>
<dbReference type="NCBIfam" id="NF001453">
    <property type="entry name" value="PRK00312.1"/>
    <property type="match status" value="1"/>
</dbReference>
<dbReference type="PANTHER" id="PTHR11579">
    <property type="entry name" value="PROTEIN-L-ISOASPARTATE O-METHYLTRANSFERASE"/>
    <property type="match status" value="1"/>
</dbReference>
<dbReference type="PANTHER" id="PTHR11579:SF0">
    <property type="entry name" value="PROTEIN-L-ISOASPARTATE(D-ASPARTATE) O-METHYLTRANSFERASE"/>
    <property type="match status" value="1"/>
</dbReference>
<dbReference type="Pfam" id="PF01135">
    <property type="entry name" value="PCMT"/>
    <property type="match status" value="1"/>
</dbReference>
<dbReference type="SUPFAM" id="SSF53335">
    <property type="entry name" value="S-adenosyl-L-methionine-dependent methyltransferases"/>
    <property type="match status" value="1"/>
</dbReference>
<dbReference type="PROSITE" id="PS01279">
    <property type="entry name" value="PCMT"/>
    <property type="match status" value="1"/>
</dbReference>
<name>PIMT_SHEPA</name>
<gene>
    <name evidence="1" type="primary">pcm</name>
    <name type="ordered locus">Spea_1191</name>
</gene>
<organism>
    <name type="scientific">Shewanella pealeana (strain ATCC 700345 / ANG-SQ1)</name>
    <dbReference type="NCBI Taxonomy" id="398579"/>
    <lineage>
        <taxon>Bacteria</taxon>
        <taxon>Pseudomonadati</taxon>
        <taxon>Pseudomonadota</taxon>
        <taxon>Gammaproteobacteria</taxon>
        <taxon>Alteromonadales</taxon>
        <taxon>Shewanellaceae</taxon>
        <taxon>Shewanella</taxon>
    </lineage>
</organism>
<comment type="function">
    <text evidence="1">Catalyzes the methyl esterification of L-isoaspartyl residues in peptides and proteins that result from spontaneous decomposition of normal L-aspartyl and L-asparaginyl residues. It plays a role in the repair and/or degradation of damaged proteins.</text>
</comment>
<comment type="catalytic activity">
    <reaction evidence="1">
        <text>[protein]-L-isoaspartate + S-adenosyl-L-methionine = [protein]-L-isoaspartate alpha-methyl ester + S-adenosyl-L-homocysteine</text>
        <dbReference type="Rhea" id="RHEA:12705"/>
        <dbReference type="Rhea" id="RHEA-COMP:12143"/>
        <dbReference type="Rhea" id="RHEA-COMP:12144"/>
        <dbReference type="ChEBI" id="CHEBI:57856"/>
        <dbReference type="ChEBI" id="CHEBI:59789"/>
        <dbReference type="ChEBI" id="CHEBI:90596"/>
        <dbReference type="ChEBI" id="CHEBI:90598"/>
        <dbReference type="EC" id="2.1.1.77"/>
    </reaction>
</comment>
<comment type="subcellular location">
    <subcellularLocation>
        <location evidence="1">Cytoplasm</location>
    </subcellularLocation>
</comment>
<comment type="similarity">
    <text evidence="1">Belongs to the methyltransferase superfamily. L-isoaspartyl/D-aspartyl protein methyltransferase family.</text>
</comment>
<keyword id="KW-0963">Cytoplasm</keyword>
<keyword id="KW-0489">Methyltransferase</keyword>
<keyword id="KW-1185">Reference proteome</keyword>
<keyword id="KW-0949">S-adenosyl-L-methionine</keyword>
<keyword id="KW-0808">Transferase</keyword>
<feature type="chain" id="PRO_1000093287" description="Protein-L-isoaspartate O-methyltransferase">
    <location>
        <begin position="1"/>
        <end position="211"/>
    </location>
</feature>
<feature type="active site" evidence="1">
    <location>
        <position position="62"/>
    </location>
</feature>
<sequence length="211" mass="22757">MNPVASTSALNLARSLYEAGIRNEAVLRAVANTPREQFLEPALGHKAYENTALPIGQGQTISQPYIVARMTEIILQNKPSKVLEIGTGSGYQAAVLAQLVPQLCTVERIKSLQIQARQRLKKLDLHNVAFKYGDGWQGWPSKGPYDAIMVTAAASSVPEALVAQLADGGVLVIPVGELSQQLLKLTRVGNQFTSEVIENVRFVPLVSGELA</sequence>